<keyword id="KW-0997">Cell inner membrane</keyword>
<keyword id="KW-1003">Cell membrane</keyword>
<keyword id="KW-0444">Lipid biosynthesis</keyword>
<keyword id="KW-0443">Lipid metabolism</keyword>
<keyword id="KW-0472">Membrane</keyword>
<keyword id="KW-0594">Phospholipid biosynthesis</keyword>
<keyword id="KW-1208">Phospholipid metabolism</keyword>
<keyword id="KW-1185">Reference proteome</keyword>
<keyword id="KW-0808">Transferase</keyword>
<keyword id="KW-0812">Transmembrane</keyword>
<keyword id="KW-1133">Transmembrane helix</keyword>
<gene>
    <name evidence="1" type="primary">plsY</name>
    <name type="ordered locus">GbCGDNIH1_0806</name>
</gene>
<evidence type="ECO:0000255" key="1">
    <source>
        <dbReference type="HAMAP-Rule" id="MF_01043"/>
    </source>
</evidence>
<organism>
    <name type="scientific">Granulibacter bethesdensis (strain ATCC BAA-1260 / CGDNIH1)</name>
    <dbReference type="NCBI Taxonomy" id="391165"/>
    <lineage>
        <taxon>Bacteria</taxon>
        <taxon>Pseudomonadati</taxon>
        <taxon>Pseudomonadota</taxon>
        <taxon>Alphaproteobacteria</taxon>
        <taxon>Acetobacterales</taxon>
        <taxon>Acetobacteraceae</taxon>
        <taxon>Granulibacter</taxon>
    </lineage>
</organism>
<protein>
    <recommendedName>
        <fullName evidence="1">Glycerol-3-phosphate acyltransferase</fullName>
    </recommendedName>
    <alternativeName>
        <fullName evidence="1">Acyl-PO4 G3P acyltransferase</fullName>
    </alternativeName>
    <alternativeName>
        <fullName evidence="1">Acyl-phosphate--glycerol-3-phosphate acyltransferase</fullName>
    </alternativeName>
    <alternativeName>
        <fullName evidence="1">G3P acyltransferase</fullName>
        <shortName evidence="1">GPAT</shortName>
        <ecNumber evidence="1">2.3.1.275</ecNumber>
    </alternativeName>
    <alternativeName>
        <fullName evidence="1">Lysophosphatidic acid synthase</fullName>
        <shortName evidence="1">LPA synthase</shortName>
    </alternativeName>
</protein>
<feature type="chain" id="PRO_1000064180" description="Glycerol-3-phosphate acyltransferase">
    <location>
        <begin position="1"/>
        <end position="211"/>
    </location>
</feature>
<feature type="transmembrane region" description="Helical" evidence="1">
    <location>
        <begin position="8"/>
        <end position="28"/>
    </location>
</feature>
<feature type="transmembrane region" description="Helical" evidence="1">
    <location>
        <begin position="84"/>
        <end position="104"/>
    </location>
</feature>
<feature type="transmembrane region" description="Helical" evidence="1">
    <location>
        <begin position="116"/>
        <end position="136"/>
    </location>
</feature>
<feature type="transmembrane region" description="Helical" evidence="1">
    <location>
        <begin position="145"/>
        <end position="165"/>
    </location>
</feature>
<feature type="transmembrane region" description="Helical" evidence="1">
    <location>
        <begin position="170"/>
        <end position="190"/>
    </location>
</feature>
<accession>Q0BTZ8</accession>
<sequence>MNGTMTSYCLALLGGYLLGSIPFGLILTRLSGAGDIRKIGSGNIGATNVLRTGRKGLAATTLLLDGGKGAAAALLAVHLGGWALALPAGIAAVIGHLFPVWLGFRGGKGVATGLGVLLATAWPVGLICCALWFAVARTIKISSAAALCAFAFAPLLALAVGGMGLGPPPLAQSHWQAAAAFMLIAVLVFLRHADNIARLRAGTESRIGTRS</sequence>
<reference key="1">
    <citation type="journal article" date="2007" name="J. Bacteriol.">
        <title>Genome sequence analysis of the emerging human pathogenic acetic acid bacterium Granulibacter bethesdensis.</title>
        <authorList>
            <person name="Greenberg D.E."/>
            <person name="Porcella S.F."/>
            <person name="Zelazny A.M."/>
            <person name="Virtaneva K."/>
            <person name="Sturdevant D.E."/>
            <person name="Kupko J.J. III"/>
            <person name="Barbian K.D."/>
            <person name="Babar A."/>
            <person name="Dorward D.W."/>
            <person name="Holland S.M."/>
        </authorList>
    </citation>
    <scope>NUCLEOTIDE SEQUENCE [LARGE SCALE GENOMIC DNA]</scope>
    <source>
        <strain>ATCC BAA-1260 / CGDNIH1</strain>
    </source>
</reference>
<comment type="function">
    <text evidence="1">Catalyzes the transfer of an acyl group from acyl-phosphate (acyl-PO(4)) to glycerol-3-phosphate (G3P) to form lysophosphatidic acid (LPA). This enzyme utilizes acyl-phosphate as fatty acyl donor, but not acyl-CoA or acyl-ACP.</text>
</comment>
<comment type="catalytic activity">
    <reaction evidence="1">
        <text>an acyl phosphate + sn-glycerol 3-phosphate = a 1-acyl-sn-glycero-3-phosphate + phosphate</text>
        <dbReference type="Rhea" id="RHEA:34075"/>
        <dbReference type="ChEBI" id="CHEBI:43474"/>
        <dbReference type="ChEBI" id="CHEBI:57597"/>
        <dbReference type="ChEBI" id="CHEBI:57970"/>
        <dbReference type="ChEBI" id="CHEBI:59918"/>
        <dbReference type="EC" id="2.3.1.275"/>
    </reaction>
</comment>
<comment type="pathway">
    <text evidence="1">Lipid metabolism; phospholipid metabolism.</text>
</comment>
<comment type="subunit">
    <text evidence="1">Probably interacts with PlsX.</text>
</comment>
<comment type="subcellular location">
    <subcellularLocation>
        <location evidence="1">Cell inner membrane</location>
        <topology evidence="1">Multi-pass membrane protein</topology>
    </subcellularLocation>
</comment>
<comment type="similarity">
    <text evidence="1">Belongs to the PlsY family.</text>
</comment>
<proteinExistence type="inferred from homology"/>
<dbReference type="EC" id="2.3.1.275" evidence="1"/>
<dbReference type="EMBL" id="CP000394">
    <property type="protein sequence ID" value="ABI61704.1"/>
    <property type="molecule type" value="Genomic_DNA"/>
</dbReference>
<dbReference type="RefSeq" id="WP_011631513.1">
    <property type="nucleotide sequence ID" value="NC_008343.2"/>
</dbReference>
<dbReference type="SMR" id="Q0BTZ8"/>
<dbReference type="STRING" id="391165.GbCGDNIH1_0806"/>
<dbReference type="GeneID" id="69745063"/>
<dbReference type="KEGG" id="gbe:GbCGDNIH1_0806"/>
<dbReference type="eggNOG" id="COG0344">
    <property type="taxonomic scope" value="Bacteria"/>
</dbReference>
<dbReference type="HOGENOM" id="CLU_081254_1_0_5"/>
<dbReference type="OrthoDB" id="9777124at2"/>
<dbReference type="UniPathway" id="UPA00085"/>
<dbReference type="Proteomes" id="UP000001963">
    <property type="component" value="Chromosome"/>
</dbReference>
<dbReference type="GO" id="GO:0005886">
    <property type="term" value="C:plasma membrane"/>
    <property type="evidence" value="ECO:0007669"/>
    <property type="project" value="UniProtKB-SubCell"/>
</dbReference>
<dbReference type="GO" id="GO:0043772">
    <property type="term" value="F:acyl-phosphate glycerol-3-phosphate acyltransferase activity"/>
    <property type="evidence" value="ECO:0007669"/>
    <property type="project" value="UniProtKB-UniRule"/>
</dbReference>
<dbReference type="GO" id="GO:0008654">
    <property type="term" value="P:phospholipid biosynthetic process"/>
    <property type="evidence" value="ECO:0007669"/>
    <property type="project" value="UniProtKB-UniRule"/>
</dbReference>
<dbReference type="HAMAP" id="MF_01043">
    <property type="entry name" value="PlsY"/>
    <property type="match status" value="1"/>
</dbReference>
<dbReference type="InterPro" id="IPR003811">
    <property type="entry name" value="G3P_acylTferase_PlsY"/>
</dbReference>
<dbReference type="NCBIfam" id="TIGR00023">
    <property type="entry name" value="glycerol-3-phosphate 1-O-acyltransferase PlsY"/>
    <property type="match status" value="1"/>
</dbReference>
<dbReference type="PANTHER" id="PTHR30309:SF0">
    <property type="entry name" value="GLYCEROL-3-PHOSPHATE ACYLTRANSFERASE-RELATED"/>
    <property type="match status" value="1"/>
</dbReference>
<dbReference type="PANTHER" id="PTHR30309">
    <property type="entry name" value="INNER MEMBRANE PROTEIN YGIH"/>
    <property type="match status" value="1"/>
</dbReference>
<dbReference type="Pfam" id="PF02660">
    <property type="entry name" value="G3P_acyltransf"/>
    <property type="match status" value="1"/>
</dbReference>
<dbReference type="SMART" id="SM01207">
    <property type="entry name" value="G3P_acyltransf"/>
    <property type="match status" value="1"/>
</dbReference>
<name>PLSY_GRABC</name>